<evidence type="ECO:0000255" key="1">
    <source>
        <dbReference type="HAMAP-Rule" id="MF_01326"/>
    </source>
</evidence>
<evidence type="ECO:0000305" key="2"/>
<accession>C0ZIJ1</accession>
<name>RL24_BREBN</name>
<reference key="1">
    <citation type="submission" date="2005-03" db="EMBL/GenBank/DDBJ databases">
        <title>Brevibacillus brevis strain 47, complete genome.</title>
        <authorList>
            <person name="Hosoyama A."/>
            <person name="Yamada R."/>
            <person name="Hongo Y."/>
            <person name="Terui Y."/>
            <person name="Ankai A."/>
            <person name="Masuyama W."/>
            <person name="Sekiguchi M."/>
            <person name="Takeda T."/>
            <person name="Asano K."/>
            <person name="Ohji S."/>
            <person name="Ichikawa N."/>
            <person name="Narita S."/>
            <person name="Aoki N."/>
            <person name="Miura H."/>
            <person name="Matsushita S."/>
            <person name="Sekigawa T."/>
            <person name="Yamagata H."/>
            <person name="Yoshikawa H."/>
            <person name="Udaka S."/>
            <person name="Tanikawa S."/>
            <person name="Fujita N."/>
        </authorList>
    </citation>
    <scope>NUCLEOTIDE SEQUENCE [LARGE SCALE GENOMIC DNA]</scope>
    <source>
        <strain>47 / JCM 6285 / NBRC 100599</strain>
    </source>
</reference>
<keyword id="KW-1185">Reference proteome</keyword>
<keyword id="KW-0687">Ribonucleoprotein</keyword>
<keyword id="KW-0689">Ribosomal protein</keyword>
<keyword id="KW-0694">RNA-binding</keyword>
<keyword id="KW-0699">rRNA-binding</keyword>
<sequence>MHVKKGDTVIVNAGKDKGKKGRVLAAYPKKERVLVEGINLVKKHSRPSQANPQGGIVTQEAAIHVSNVSLIDPKSGKATRIGYKVLDNGKKVRYAKKSGEVLDK</sequence>
<feature type="chain" id="PRO_1000165930" description="Large ribosomal subunit protein uL24">
    <location>
        <begin position="1"/>
        <end position="104"/>
    </location>
</feature>
<organism>
    <name type="scientific">Brevibacillus brevis (strain 47 / JCM 6285 / NBRC 100599)</name>
    <dbReference type="NCBI Taxonomy" id="358681"/>
    <lineage>
        <taxon>Bacteria</taxon>
        <taxon>Bacillati</taxon>
        <taxon>Bacillota</taxon>
        <taxon>Bacilli</taxon>
        <taxon>Bacillales</taxon>
        <taxon>Paenibacillaceae</taxon>
        <taxon>Brevibacillus</taxon>
    </lineage>
</organism>
<proteinExistence type="inferred from homology"/>
<comment type="function">
    <text evidence="1">One of two assembly initiator proteins, it binds directly to the 5'-end of the 23S rRNA, where it nucleates assembly of the 50S subunit.</text>
</comment>
<comment type="function">
    <text evidence="1">One of the proteins that surrounds the polypeptide exit tunnel on the outside of the subunit.</text>
</comment>
<comment type="subunit">
    <text evidence="1">Part of the 50S ribosomal subunit.</text>
</comment>
<comment type="similarity">
    <text evidence="1">Belongs to the universal ribosomal protein uL24 family.</text>
</comment>
<dbReference type="EMBL" id="AP008955">
    <property type="protein sequence ID" value="BAH41209.1"/>
    <property type="molecule type" value="Genomic_DNA"/>
</dbReference>
<dbReference type="RefSeq" id="WP_007716253.1">
    <property type="nucleotide sequence ID" value="NC_012491.1"/>
</dbReference>
<dbReference type="SMR" id="C0ZIJ1"/>
<dbReference type="STRING" id="358681.BBR47_02320"/>
<dbReference type="GeneID" id="87588860"/>
<dbReference type="KEGG" id="bbe:BBR47_02320"/>
<dbReference type="eggNOG" id="COG0198">
    <property type="taxonomic scope" value="Bacteria"/>
</dbReference>
<dbReference type="HOGENOM" id="CLU_093315_2_0_9"/>
<dbReference type="Proteomes" id="UP000001877">
    <property type="component" value="Chromosome"/>
</dbReference>
<dbReference type="GO" id="GO:1990904">
    <property type="term" value="C:ribonucleoprotein complex"/>
    <property type="evidence" value="ECO:0007669"/>
    <property type="project" value="UniProtKB-KW"/>
</dbReference>
<dbReference type="GO" id="GO:0005840">
    <property type="term" value="C:ribosome"/>
    <property type="evidence" value="ECO:0007669"/>
    <property type="project" value="UniProtKB-KW"/>
</dbReference>
<dbReference type="GO" id="GO:0019843">
    <property type="term" value="F:rRNA binding"/>
    <property type="evidence" value="ECO:0007669"/>
    <property type="project" value="UniProtKB-UniRule"/>
</dbReference>
<dbReference type="GO" id="GO:0003735">
    <property type="term" value="F:structural constituent of ribosome"/>
    <property type="evidence" value="ECO:0007669"/>
    <property type="project" value="InterPro"/>
</dbReference>
<dbReference type="GO" id="GO:0006412">
    <property type="term" value="P:translation"/>
    <property type="evidence" value="ECO:0007669"/>
    <property type="project" value="UniProtKB-UniRule"/>
</dbReference>
<dbReference type="CDD" id="cd06089">
    <property type="entry name" value="KOW_RPL26"/>
    <property type="match status" value="1"/>
</dbReference>
<dbReference type="FunFam" id="2.30.30.30:FF:000004">
    <property type="entry name" value="50S ribosomal protein L24"/>
    <property type="match status" value="1"/>
</dbReference>
<dbReference type="Gene3D" id="2.30.30.30">
    <property type="match status" value="1"/>
</dbReference>
<dbReference type="HAMAP" id="MF_01326_B">
    <property type="entry name" value="Ribosomal_uL24_B"/>
    <property type="match status" value="1"/>
</dbReference>
<dbReference type="InterPro" id="IPR005824">
    <property type="entry name" value="KOW"/>
</dbReference>
<dbReference type="InterPro" id="IPR014722">
    <property type="entry name" value="Rib_uL2_dom2"/>
</dbReference>
<dbReference type="InterPro" id="IPR003256">
    <property type="entry name" value="Ribosomal_uL24"/>
</dbReference>
<dbReference type="InterPro" id="IPR041988">
    <property type="entry name" value="Ribosomal_uL24_KOW"/>
</dbReference>
<dbReference type="InterPro" id="IPR008991">
    <property type="entry name" value="Translation_prot_SH3-like_sf"/>
</dbReference>
<dbReference type="NCBIfam" id="TIGR01079">
    <property type="entry name" value="rplX_bact"/>
    <property type="match status" value="1"/>
</dbReference>
<dbReference type="PANTHER" id="PTHR12903">
    <property type="entry name" value="MITOCHONDRIAL RIBOSOMAL PROTEIN L24"/>
    <property type="match status" value="1"/>
</dbReference>
<dbReference type="Pfam" id="PF00467">
    <property type="entry name" value="KOW"/>
    <property type="match status" value="1"/>
</dbReference>
<dbReference type="Pfam" id="PF17136">
    <property type="entry name" value="ribosomal_L24"/>
    <property type="match status" value="1"/>
</dbReference>
<dbReference type="SMART" id="SM00739">
    <property type="entry name" value="KOW"/>
    <property type="match status" value="1"/>
</dbReference>
<dbReference type="SUPFAM" id="SSF50104">
    <property type="entry name" value="Translation proteins SH3-like domain"/>
    <property type="match status" value="1"/>
</dbReference>
<gene>
    <name evidence="1" type="primary">rplX</name>
    <name type="ordered locus">BBR47_02320</name>
</gene>
<protein>
    <recommendedName>
        <fullName evidence="1">Large ribosomal subunit protein uL24</fullName>
    </recommendedName>
    <alternativeName>
        <fullName evidence="2">50S ribosomal protein L24</fullName>
    </alternativeName>
</protein>